<accession>Q82X61</accession>
<organism>
    <name type="scientific">Nitrosomonas europaea (strain ATCC 19718 / CIP 103999 / KCTC 2705 / NBRC 14298)</name>
    <dbReference type="NCBI Taxonomy" id="228410"/>
    <lineage>
        <taxon>Bacteria</taxon>
        <taxon>Pseudomonadati</taxon>
        <taxon>Pseudomonadota</taxon>
        <taxon>Betaproteobacteria</taxon>
        <taxon>Nitrosomonadales</taxon>
        <taxon>Nitrosomonadaceae</taxon>
        <taxon>Nitrosomonas</taxon>
    </lineage>
</organism>
<gene>
    <name type="ordered locus">NE0434</name>
</gene>
<name>Y434_NITEU</name>
<sequence length="107" mass="11563">MKANLGNLMKQAQQMQENMKAMQEKLAAIEVEGQAGAGMVKVTMTCRYDVKRVNIDSSLIGDDKEMLEDLVAAAVNDAVRRVETVTQEKMASVAGGLGLPAGMKFPF</sequence>
<proteinExistence type="inferred from homology"/>
<dbReference type="EMBL" id="AL954747">
    <property type="protein sequence ID" value="CAD84345.1"/>
    <property type="molecule type" value="Genomic_DNA"/>
</dbReference>
<dbReference type="SMR" id="Q82X61"/>
<dbReference type="STRING" id="228410.NE0434"/>
<dbReference type="KEGG" id="neu:NE0434"/>
<dbReference type="eggNOG" id="COG0718">
    <property type="taxonomic scope" value="Bacteria"/>
</dbReference>
<dbReference type="HOGENOM" id="CLU_140930_0_0_4"/>
<dbReference type="OrthoDB" id="9808738at2"/>
<dbReference type="PhylomeDB" id="Q82X61"/>
<dbReference type="Proteomes" id="UP000001416">
    <property type="component" value="Chromosome"/>
</dbReference>
<dbReference type="GO" id="GO:0043590">
    <property type="term" value="C:bacterial nucleoid"/>
    <property type="evidence" value="ECO:0007669"/>
    <property type="project" value="UniProtKB-UniRule"/>
</dbReference>
<dbReference type="GO" id="GO:0005829">
    <property type="term" value="C:cytosol"/>
    <property type="evidence" value="ECO:0007669"/>
    <property type="project" value="TreeGrafter"/>
</dbReference>
<dbReference type="GO" id="GO:0003677">
    <property type="term" value="F:DNA binding"/>
    <property type="evidence" value="ECO:0007669"/>
    <property type="project" value="UniProtKB-UniRule"/>
</dbReference>
<dbReference type="Gene3D" id="3.30.1310.10">
    <property type="entry name" value="Nucleoid-associated protein YbaB-like domain"/>
    <property type="match status" value="1"/>
</dbReference>
<dbReference type="HAMAP" id="MF_00274">
    <property type="entry name" value="DNA_YbaB_EbfC"/>
    <property type="match status" value="1"/>
</dbReference>
<dbReference type="InterPro" id="IPR036894">
    <property type="entry name" value="YbaB-like_sf"/>
</dbReference>
<dbReference type="InterPro" id="IPR004401">
    <property type="entry name" value="YbaB/EbfC"/>
</dbReference>
<dbReference type="NCBIfam" id="TIGR00103">
    <property type="entry name" value="DNA_YbaB_EbfC"/>
    <property type="match status" value="1"/>
</dbReference>
<dbReference type="PANTHER" id="PTHR33449">
    <property type="entry name" value="NUCLEOID-ASSOCIATED PROTEIN YBAB"/>
    <property type="match status" value="1"/>
</dbReference>
<dbReference type="PANTHER" id="PTHR33449:SF1">
    <property type="entry name" value="NUCLEOID-ASSOCIATED PROTEIN YBAB"/>
    <property type="match status" value="1"/>
</dbReference>
<dbReference type="Pfam" id="PF02575">
    <property type="entry name" value="YbaB_DNA_bd"/>
    <property type="match status" value="1"/>
</dbReference>
<dbReference type="PIRSF" id="PIRSF004555">
    <property type="entry name" value="UCP004555"/>
    <property type="match status" value="1"/>
</dbReference>
<dbReference type="SUPFAM" id="SSF82607">
    <property type="entry name" value="YbaB-like"/>
    <property type="match status" value="1"/>
</dbReference>
<protein>
    <recommendedName>
        <fullName evidence="1">Nucleoid-associated protein NE0434</fullName>
    </recommendedName>
</protein>
<reference key="1">
    <citation type="journal article" date="2003" name="J. Bacteriol.">
        <title>Complete genome sequence of the ammonia-oxidizing bacterium and obligate chemolithoautotroph Nitrosomonas europaea.</title>
        <authorList>
            <person name="Chain P."/>
            <person name="Lamerdin J.E."/>
            <person name="Larimer F.W."/>
            <person name="Regala W."/>
            <person name="Lao V."/>
            <person name="Land M.L."/>
            <person name="Hauser L."/>
            <person name="Hooper A.B."/>
            <person name="Klotz M.G."/>
            <person name="Norton J."/>
            <person name="Sayavedra-Soto L.A."/>
            <person name="Arciero D.M."/>
            <person name="Hommes N.G."/>
            <person name="Whittaker M.M."/>
            <person name="Arp D.J."/>
        </authorList>
    </citation>
    <scope>NUCLEOTIDE SEQUENCE [LARGE SCALE GENOMIC DNA]</scope>
    <source>
        <strain>ATCC 19718 / CIP 103999 / KCTC 2705 / NBRC 14298</strain>
    </source>
</reference>
<feature type="chain" id="PRO_0000170416" description="Nucleoid-associated protein NE0434">
    <location>
        <begin position="1"/>
        <end position="107"/>
    </location>
</feature>
<keyword id="KW-0963">Cytoplasm</keyword>
<keyword id="KW-0238">DNA-binding</keyword>
<keyword id="KW-1185">Reference proteome</keyword>
<evidence type="ECO:0000255" key="1">
    <source>
        <dbReference type="HAMAP-Rule" id="MF_00274"/>
    </source>
</evidence>
<comment type="function">
    <text evidence="1">Binds to DNA and alters its conformation. May be involved in regulation of gene expression, nucleoid organization and DNA protection.</text>
</comment>
<comment type="subunit">
    <text evidence="1">Homodimer.</text>
</comment>
<comment type="subcellular location">
    <subcellularLocation>
        <location evidence="1">Cytoplasm</location>
        <location evidence="1">Nucleoid</location>
    </subcellularLocation>
</comment>
<comment type="similarity">
    <text evidence="1">Belongs to the YbaB/EbfC family.</text>
</comment>